<keyword id="KW-0007">Acetylation</keyword>
<keyword id="KW-0378">Hydrolase</keyword>
<keyword id="KW-1185">Reference proteome</keyword>
<keyword id="KW-0719">Serine esterase</keyword>
<feature type="chain" id="PRO_0000402553" description="Probable carboxylesterase 7">
    <location>
        <begin position="1"/>
        <end position="312"/>
    </location>
</feature>
<feature type="short sequence motif" description="Involved in the stabilization of the negatively charged intermediate by the formation of the oxyanion hole" evidence="2">
    <location>
        <begin position="75"/>
        <end position="77"/>
    </location>
</feature>
<feature type="active site" evidence="2">
    <location>
        <position position="159"/>
    </location>
</feature>
<feature type="active site" evidence="2">
    <location>
        <position position="255"/>
    </location>
</feature>
<feature type="active site" evidence="2">
    <location>
        <position position="287"/>
    </location>
</feature>
<feature type="modified residue" description="N-acetylmethionine" evidence="3">
    <location>
        <position position="1"/>
    </location>
</feature>
<reference key="1">
    <citation type="journal article" date="1999" name="Nature">
        <title>Sequence and analysis of chromosome 2 of the plant Arabidopsis thaliana.</title>
        <authorList>
            <person name="Lin X."/>
            <person name="Kaul S."/>
            <person name="Rounsley S.D."/>
            <person name="Shea T.P."/>
            <person name="Benito M.-I."/>
            <person name="Town C.D."/>
            <person name="Fujii C.Y."/>
            <person name="Mason T.M."/>
            <person name="Bowman C.L."/>
            <person name="Barnstead M.E."/>
            <person name="Feldblyum T.V."/>
            <person name="Buell C.R."/>
            <person name="Ketchum K.A."/>
            <person name="Lee J.J."/>
            <person name="Ronning C.M."/>
            <person name="Koo H.L."/>
            <person name="Moffat K.S."/>
            <person name="Cronin L.A."/>
            <person name="Shen M."/>
            <person name="Pai G."/>
            <person name="Van Aken S."/>
            <person name="Umayam L."/>
            <person name="Tallon L.J."/>
            <person name="Gill J.E."/>
            <person name="Adams M.D."/>
            <person name="Carrera A.J."/>
            <person name="Creasy T.H."/>
            <person name="Goodman H.M."/>
            <person name="Somerville C.R."/>
            <person name="Copenhaver G.P."/>
            <person name="Preuss D."/>
            <person name="Nierman W.C."/>
            <person name="White O."/>
            <person name="Eisen J.A."/>
            <person name="Salzberg S.L."/>
            <person name="Fraser C.M."/>
            <person name="Venter J.C."/>
        </authorList>
    </citation>
    <scope>NUCLEOTIDE SEQUENCE [LARGE SCALE GENOMIC DNA]</scope>
    <source>
        <strain>cv. Columbia</strain>
    </source>
</reference>
<reference key="2">
    <citation type="journal article" date="2017" name="Plant J.">
        <title>Araport11: a complete reannotation of the Arabidopsis thaliana reference genome.</title>
        <authorList>
            <person name="Cheng C.Y."/>
            <person name="Krishnakumar V."/>
            <person name="Chan A.P."/>
            <person name="Thibaud-Nissen F."/>
            <person name="Schobel S."/>
            <person name="Town C.D."/>
        </authorList>
    </citation>
    <scope>GENOME REANNOTATION</scope>
    <source>
        <strain>cv. Columbia</strain>
    </source>
</reference>
<reference key="3">
    <citation type="journal article" date="2003" name="Science">
        <title>Empirical analysis of transcriptional activity in the Arabidopsis genome.</title>
        <authorList>
            <person name="Yamada K."/>
            <person name="Lim J."/>
            <person name="Dale J.M."/>
            <person name="Chen H."/>
            <person name="Shinn P."/>
            <person name="Palm C.J."/>
            <person name="Southwick A.M."/>
            <person name="Wu H.C."/>
            <person name="Kim C.J."/>
            <person name="Nguyen M."/>
            <person name="Pham P.K."/>
            <person name="Cheuk R.F."/>
            <person name="Karlin-Newmann G."/>
            <person name="Liu S.X."/>
            <person name="Lam B."/>
            <person name="Sakano H."/>
            <person name="Wu T."/>
            <person name="Yu G."/>
            <person name="Miranda M."/>
            <person name="Quach H.L."/>
            <person name="Tripp M."/>
            <person name="Chang C.H."/>
            <person name="Lee J.M."/>
            <person name="Toriumi M.J."/>
            <person name="Chan M.M."/>
            <person name="Tang C.C."/>
            <person name="Onodera C.S."/>
            <person name="Deng J.M."/>
            <person name="Akiyama K."/>
            <person name="Ansari Y."/>
            <person name="Arakawa T."/>
            <person name="Banh J."/>
            <person name="Banno F."/>
            <person name="Bowser L."/>
            <person name="Brooks S.Y."/>
            <person name="Carninci P."/>
            <person name="Chao Q."/>
            <person name="Choy N."/>
            <person name="Enju A."/>
            <person name="Goldsmith A.D."/>
            <person name="Gurjal M."/>
            <person name="Hansen N.F."/>
            <person name="Hayashizaki Y."/>
            <person name="Johnson-Hopson C."/>
            <person name="Hsuan V.W."/>
            <person name="Iida K."/>
            <person name="Karnes M."/>
            <person name="Khan S."/>
            <person name="Koesema E."/>
            <person name="Ishida J."/>
            <person name="Jiang P.X."/>
            <person name="Jones T."/>
            <person name="Kawai J."/>
            <person name="Kamiya A."/>
            <person name="Meyers C."/>
            <person name="Nakajima M."/>
            <person name="Narusaka M."/>
            <person name="Seki M."/>
            <person name="Sakurai T."/>
            <person name="Satou M."/>
            <person name="Tamse R."/>
            <person name="Vaysberg M."/>
            <person name="Wallender E.K."/>
            <person name="Wong C."/>
            <person name="Yamamura Y."/>
            <person name="Yuan S."/>
            <person name="Shinozaki K."/>
            <person name="Davis R.W."/>
            <person name="Theologis A."/>
            <person name="Ecker J.R."/>
        </authorList>
    </citation>
    <scope>NUCLEOTIDE SEQUENCE [LARGE SCALE MRNA] OF 5-312</scope>
    <source>
        <strain>cv. Columbia</strain>
    </source>
</reference>
<reference key="4">
    <citation type="submission" date="2004-07" db="EMBL/GenBank/DDBJ databases">
        <title>Arabidopsis ORF clones.</title>
        <authorList>
            <person name="Kim C.J."/>
            <person name="Chen H."/>
            <person name="Cheuk R.F."/>
            <person name="Shinn P."/>
            <person name="Ecker J.R."/>
        </authorList>
    </citation>
    <scope>NUCLEOTIDE SEQUENCE [LARGE SCALE MRNA] OF 12-312</scope>
    <source>
        <strain>cv. Columbia</strain>
    </source>
</reference>
<reference key="5">
    <citation type="journal article" date="2003" name="J. Mol. Evol.">
        <title>The carboxylesterase gene family from Arabidopsis thaliana.</title>
        <authorList>
            <person name="Marshall S.D."/>
            <person name="Putterill J.J."/>
            <person name="Plummer K.M."/>
            <person name="Newcomb R.D."/>
        </authorList>
    </citation>
    <scope>TISSUE SPECIFICITY</scope>
    <scope>GENE FAMILY</scope>
    <scope>NOMENCLATURE</scope>
</reference>
<accession>Q9ZQ91</accession>
<accession>Q6DBI8</accession>
<accession>Q84WE2</accession>
<gene>
    <name type="primary">CXE7</name>
    <name type="ordered locus">At2g03550</name>
    <name type="ORF">T4M8.1</name>
</gene>
<comment type="function">
    <text evidence="1">Carboxylesterase acting on esters with varying acyl chain length.</text>
</comment>
<comment type="catalytic activity">
    <reaction>
        <text>a carboxylic ester + H2O = an alcohol + a carboxylate + H(+)</text>
        <dbReference type="Rhea" id="RHEA:21164"/>
        <dbReference type="ChEBI" id="CHEBI:15377"/>
        <dbReference type="ChEBI" id="CHEBI:15378"/>
        <dbReference type="ChEBI" id="CHEBI:29067"/>
        <dbReference type="ChEBI" id="CHEBI:30879"/>
        <dbReference type="ChEBI" id="CHEBI:33308"/>
        <dbReference type="EC" id="3.1.1.1"/>
    </reaction>
</comment>
<comment type="tissue specificity">
    <text evidence="4">Expressed in leaves, stems, flowers and siliques.</text>
</comment>
<comment type="similarity">
    <text evidence="5">Belongs to the 'GDXG' lipolytic enzyme family.</text>
</comment>
<organism>
    <name type="scientific">Arabidopsis thaliana</name>
    <name type="common">Mouse-ear cress</name>
    <dbReference type="NCBI Taxonomy" id="3702"/>
    <lineage>
        <taxon>Eukaryota</taxon>
        <taxon>Viridiplantae</taxon>
        <taxon>Streptophyta</taxon>
        <taxon>Embryophyta</taxon>
        <taxon>Tracheophyta</taxon>
        <taxon>Spermatophyta</taxon>
        <taxon>Magnoliopsida</taxon>
        <taxon>eudicotyledons</taxon>
        <taxon>Gunneridae</taxon>
        <taxon>Pentapetalae</taxon>
        <taxon>rosids</taxon>
        <taxon>malvids</taxon>
        <taxon>Brassicales</taxon>
        <taxon>Brassicaceae</taxon>
        <taxon>Camelineae</taxon>
        <taxon>Arabidopsis</taxon>
    </lineage>
</organism>
<protein>
    <recommendedName>
        <fullName>Probable carboxylesterase 7</fullName>
    </recommendedName>
    <alternativeName>
        <fullName>AtCXE7</fullName>
        <ecNumber>3.1.1.1</ecNumber>
    </alternativeName>
</protein>
<sequence length="312" mass="34750">MDSVIAFDRSPMFRVYKSGRIERLLGETTVPPSLTPQNGVVSKDIIHSPEKNLSLRIYLPEKVTVKKLPILIYFHGGGFIIETAFSPPYHTFLTSAVAAANCLAISVNYRRAPEFPVPIPYEDSWDSLKWVLTHITGTGPETWINKHGDFGKVFLAGDSAGGNISHHLTMRAKKEKLCDSLISGIILIHPYFWSKTPIDEFEVRDVGKTKGVEGSWRVASPNSKQGVDDPWLNVVGSDPSGLGCGRVLVMVAGDDLFVRQGWCYAEKLKKSGWEGEVEVMETKNEGHVFHLKNPNSDNARQVVKKLEEFINK</sequence>
<proteinExistence type="evidence at transcript level"/>
<name>CXE7_ARATH</name>
<dbReference type="EC" id="3.1.1.1"/>
<dbReference type="EMBL" id="AC006284">
    <property type="protein sequence ID" value="AAD17422.1"/>
    <property type="molecule type" value="Genomic_DNA"/>
</dbReference>
<dbReference type="EMBL" id="CP002685">
    <property type="protein sequence ID" value="AEC05713.1"/>
    <property type="molecule type" value="Genomic_DNA"/>
</dbReference>
<dbReference type="EMBL" id="BT003917">
    <property type="protein sequence ID" value="AAO41964.1"/>
    <property type="molecule type" value="mRNA"/>
</dbReference>
<dbReference type="EMBL" id="BT015034">
    <property type="protein sequence ID" value="AAT70485.1"/>
    <property type="molecule type" value="mRNA"/>
</dbReference>
<dbReference type="PIR" id="G84449">
    <property type="entry name" value="G84449"/>
</dbReference>
<dbReference type="RefSeq" id="NP_178453.1">
    <property type="nucleotide sequence ID" value="NM_126405.2"/>
</dbReference>
<dbReference type="SMR" id="Q9ZQ91"/>
<dbReference type="FunCoup" id="Q9ZQ91">
    <property type="interactions" value="126"/>
</dbReference>
<dbReference type="STRING" id="3702.Q9ZQ91"/>
<dbReference type="ChEMBL" id="CHEMBL1932909"/>
<dbReference type="ESTHER" id="arath-AT2G03550">
    <property type="family name" value="Plant_carboxylesterase"/>
</dbReference>
<dbReference type="iPTMnet" id="Q9ZQ91"/>
<dbReference type="PaxDb" id="3702-AT2G03550.1"/>
<dbReference type="ProteomicsDB" id="220328"/>
<dbReference type="EnsemblPlants" id="AT2G03550.1">
    <property type="protein sequence ID" value="AT2G03550.1"/>
    <property type="gene ID" value="AT2G03550"/>
</dbReference>
<dbReference type="GeneID" id="814884"/>
<dbReference type="Gramene" id="AT2G03550.1">
    <property type="protein sequence ID" value="AT2G03550.1"/>
    <property type="gene ID" value="AT2G03550"/>
</dbReference>
<dbReference type="KEGG" id="ath:AT2G03550"/>
<dbReference type="Araport" id="AT2G03550"/>
<dbReference type="TAIR" id="AT2G03550"/>
<dbReference type="eggNOG" id="KOG1515">
    <property type="taxonomic scope" value="Eukaryota"/>
</dbReference>
<dbReference type="HOGENOM" id="CLU_012494_22_0_1"/>
<dbReference type="InParanoid" id="Q9ZQ91"/>
<dbReference type="OMA" id="QWINKHA"/>
<dbReference type="PhylomeDB" id="Q9ZQ91"/>
<dbReference type="BioCyc" id="ARA:AT2G03550-MONOMER"/>
<dbReference type="PRO" id="PR:Q9ZQ91"/>
<dbReference type="Proteomes" id="UP000006548">
    <property type="component" value="Chromosome 2"/>
</dbReference>
<dbReference type="ExpressionAtlas" id="Q9ZQ91">
    <property type="expression patterns" value="baseline and differential"/>
</dbReference>
<dbReference type="GO" id="GO:0106435">
    <property type="term" value="F:carboxylesterase activity"/>
    <property type="evidence" value="ECO:0007669"/>
    <property type="project" value="UniProtKB-EC"/>
</dbReference>
<dbReference type="Gene3D" id="3.40.50.1820">
    <property type="entry name" value="alpha/beta hydrolase"/>
    <property type="match status" value="1"/>
</dbReference>
<dbReference type="InterPro" id="IPR013094">
    <property type="entry name" value="AB_hydrolase_3"/>
</dbReference>
<dbReference type="InterPro" id="IPR029058">
    <property type="entry name" value="AB_hydrolase_fold"/>
</dbReference>
<dbReference type="InterPro" id="IPR050466">
    <property type="entry name" value="Carboxylest/Gibb_receptor"/>
</dbReference>
<dbReference type="PANTHER" id="PTHR23024">
    <property type="entry name" value="ARYLACETAMIDE DEACETYLASE"/>
    <property type="match status" value="1"/>
</dbReference>
<dbReference type="PANTHER" id="PTHR23024:SF446">
    <property type="entry name" value="CARBOXYLESTERASE 7-RELATED"/>
    <property type="match status" value="1"/>
</dbReference>
<dbReference type="Pfam" id="PF07859">
    <property type="entry name" value="Abhydrolase_3"/>
    <property type="match status" value="1"/>
</dbReference>
<dbReference type="SUPFAM" id="SSF53474">
    <property type="entry name" value="alpha/beta-Hydrolases"/>
    <property type="match status" value="1"/>
</dbReference>
<evidence type="ECO:0000250" key="1"/>
<evidence type="ECO:0000250" key="2">
    <source>
        <dbReference type="UniProtKB" id="Q5NUF3"/>
    </source>
</evidence>
<evidence type="ECO:0000250" key="3">
    <source>
        <dbReference type="UniProtKB" id="Q9SMN0"/>
    </source>
</evidence>
<evidence type="ECO:0000269" key="4">
    <source>
    </source>
</evidence>
<evidence type="ECO:0000305" key="5"/>